<name>MNME_MARMS</name>
<proteinExistence type="inferred from homology"/>
<feature type="chain" id="PRO_0000345827" description="tRNA modification GTPase MnmE">
    <location>
        <begin position="1"/>
        <end position="459"/>
    </location>
</feature>
<feature type="domain" description="TrmE-type G">
    <location>
        <begin position="221"/>
        <end position="382"/>
    </location>
</feature>
<feature type="binding site" evidence="1">
    <location>
        <position position="29"/>
    </location>
    <ligand>
        <name>(6S)-5-formyl-5,6,7,8-tetrahydrofolate</name>
        <dbReference type="ChEBI" id="CHEBI:57457"/>
    </ligand>
</feature>
<feature type="binding site" evidence="1">
    <location>
        <position position="86"/>
    </location>
    <ligand>
        <name>(6S)-5-formyl-5,6,7,8-tetrahydrofolate</name>
        <dbReference type="ChEBI" id="CHEBI:57457"/>
    </ligand>
</feature>
<feature type="binding site" evidence="1">
    <location>
        <position position="125"/>
    </location>
    <ligand>
        <name>(6S)-5-formyl-5,6,7,8-tetrahydrofolate</name>
        <dbReference type="ChEBI" id="CHEBI:57457"/>
    </ligand>
</feature>
<feature type="binding site" evidence="1">
    <location>
        <begin position="231"/>
        <end position="236"/>
    </location>
    <ligand>
        <name>GTP</name>
        <dbReference type="ChEBI" id="CHEBI:37565"/>
    </ligand>
</feature>
<feature type="binding site" evidence="1">
    <location>
        <position position="231"/>
    </location>
    <ligand>
        <name>K(+)</name>
        <dbReference type="ChEBI" id="CHEBI:29103"/>
    </ligand>
</feature>
<feature type="binding site" evidence="1">
    <location>
        <position position="235"/>
    </location>
    <ligand>
        <name>Mg(2+)</name>
        <dbReference type="ChEBI" id="CHEBI:18420"/>
    </ligand>
</feature>
<feature type="binding site" evidence="1">
    <location>
        <begin position="250"/>
        <end position="256"/>
    </location>
    <ligand>
        <name>GTP</name>
        <dbReference type="ChEBI" id="CHEBI:37565"/>
    </ligand>
</feature>
<feature type="binding site" evidence="1">
    <location>
        <position position="250"/>
    </location>
    <ligand>
        <name>K(+)</name>
        <dbReference type="ChEBI" id="CHEBI:29103"/>
    </ligand>
</feature>
<feature type="binding site" evidence="1">
    <location>
        <position position="252"/>
    </location>
    <ligand>
        <name>K(+)</name>
        <dbReference type="ChEBI" id="CHEBI:29103"/>
    </ligand>
</feature>
<feature type="binding site" evidence="1">
    <location>
        <position position="255"/>
    </location>
    <ligand>
        <name>K(+)</name>
        <dbReference type="ChEBI" id="CHEBI:29103"/>
    </ligand>
</feature>
<feature type="binding site" evidence="1">
    <location>
        <position position="256"/>
    </location>
    <ligand>
        <name>Mg(2+)</name>
        <dbReference type="ChEBI" id="CHEBI:18420"/>
    </ligand>
</feature>
<feature type="binding site" evidence="1">
    <location>
        <begin position="275"/>
        <end position="278"/>
    </location>
    <ligand>
        <name>GTP</name>
        <dbReference type="ChEBI" id="CHEBI:37565"/>
    </ligand>
</feature>
<feature type="binding site" evidence="1">
    <location>
        <position position="459"/>
    </location>
    <ligand>
        <name>(6S)-5-formyl-5,6,7,8-tetrahydrofolate</name>
        <dbReference type="ChEBI" id="CHEBI:57457"/>
    </ligand>
</feature>
<gene>
    <name evidence="1" type="primary">mnmE</name>
    <name evidence="1" type="synonym">trmE</name>
    <name type="ordered locus">Mmwyl1_4484</name>
</gene>
<sequence length="459" mass="49642">MTDFQYATDQDTIAAQATAPGRGGVGIIRLSGPKSLAIAKQIIGFEPKPRYAHYVPFKTTGQEQLDEGIALYFPGPNSFTGEDVFELQGHGGPVIMDMLLSHCVALGARLARPGEFSERAFMNDKMDLTQAEAIADLIDSTSEQAAKCALRSLQGAFSKRVDELVEALIHLRIYVEAAIDFPEEEIDFIGDGKVAAELAGIQAKLAEVLKEANQGALIREGMNVVIAGRPNAGKSSLLNALSGKESAIVTNIEGTTRDVLREHIHLDGMPLHIIDTAGLRDSPDEVERIGIQRAWDEISKADRILMMVDSQSIDSKDPNEIWPEFMEKLGDTKHLTLVRNKVDLTKEGTGIETVSGVPVVSLSAKTGEGVTDLTEHLKAVMGFDSTTEGGFIARRRHIEALNKANRFLDAGNEQLHGYGAGELLAEDLKEAQQALSEITGAFTSDDLLGRIFGSFCIGK</sequence>
<comment type="function">
    <text evidence="1">Exhibits a very high intrinsic GTPase hydrolysis rate. Involved in the addition of a carboxymethylaminomethyl (cmnm) group at the wobble position (U34) of certain tRNAs, forming tRNA-cmnm(5)s(2)U34.</text>
</comment>
<comment type="cofactor">
    <cofactor evidence="1">
        <name>K(+)</name>
        <dbReference type="ChEBI" id="CHEBI:29103"/>
    </cofactor>
    <text evidence="1">Binds 1 potassium ion per subunit.</text>
</comment>
<comment type="subunit">
    <text evidence="1">Homodimer. Heterotetramer of two MnmE and two MnmG subunits.</text>
</comment>
<comment type="subcellular location">
    <subcellularLocation>
        <location evidence="1">Cytoplasm</location>
    </subcellularLocation>
</comment>
<comment type="similarity">
    <text evidence="1">Belongs to the TRAFAC class TrmE-Era-EngA-EngB-Septin-like GTPase superfamily. TrmE GTPase family.</text>
</comment>
<keyword id="KW-0963">Cytoplasm</keyword>
<keyword id="KW-0342">GTP-binding</keyword>
<keyword id="KW-0378">Hydrolase</keyword>
<keyword id="KW-0460">Magnesium</keyword>
<keyword id="KW-0479">Metal-binding</keyword>
<keyword id="KW-0547">Nucleotide-binding</keyword>
<keyword id="KW-0630">Potassium</keyword>
<keyword id="KW-0819">tRNA processing</keyword>
<reference key="1">
    <citation type="submission" date="2007-06" db="EMBL/GenBank/DDBJ databases">
        <title>Complete sequence of Marinomonas sp. MWYL1.</title>
        <authorList>
            <consortium name="US DOE Joint Genome Institute"/>
            <person name="Copeland A."/>
            <person name="Lucas S."/>
            <person name="Lapidus A."/>
            <person name="Barry K."/>
            <person name="Glavina del Rio T."/>
            <person name="Dalin E."/>
            <person name="Tice H."/>
            <person name="Pitluck S."/>
            <person name="Kiss H."/>
            <person name="Brettin T."/>
            <person name="Bruce D."/>
            <person name="Detter J.C."/>
            <person name="Han C."/>
            <person name="Schmutz J."/>
            <person name="Larimer F."/>
            <person name="Land M."/>
            <person name="Hauser L."/>
            <person name="Kyrpides N."/>
            <person name="Kim E."/>
            <person name="Johnston A.W.B."/>
            <person name="Todd J.D."/>
            <person name="Rogers R."/>
            <person name="Wexler M."/>
            <person name="Bond P.L."/>
            <person name="Li Y."/>
            <person name="Richardson P."/>
        </authorList>
    </citation>
    <scope>NUCLEOTIDE SEQUENCE [LARGE SCALE GENOMIC DNA]</scope>
    <source>
        <strain>MWYL1</strain>
    </source>
</reference>
<dbReference type="EC" id="3.6.-.-" evidence="1"/>
<dbReference type="EMBL" id="CP000749">
    <property type="protein sequence ID" value="ABR73379.1"/>
    <property type="molecule type" value="Genomic_DNA"/>
</dbReference>
<dbReference type="SMR" id="A6W3V0"/>
<dbReference type="STRING" id="400668.Mmwyl1_4484"/>
<dbReference type="KEGG" id="mmw:Mmwyl1_4484"/>
<dbReference type="eggNOG" id="COG0486">
    <property type="taxonomic scope" value="Bacteria"/>
</dbReference>
<dbReference type="HOGENOM" id="CLU_019624_4_1_6"/>
<dbReference type="OrthoDB" id="9805918at2"/>
<dbReference type="GO" id="GO:0005829">
    <property type="term" value="C:cytosol"/>
    <property type="evidence" value="ECO:0007669"/>
    <property type="project" value="TreeGrafter"/>
</dbReference>
<dbReference type="GO" id="GO:0005525">
    <property type="term" value="F:GTP binding"/>
    <property type="evidence" value="ECO:0007669"/>
    <property type="project" value="UniProtKB-UniRule"/>
</dbReference>
<dbReference type="GO" id="GO:0003924">
    <property type="term" value="F:GTPase activity"/>
    <property type="evidence" value="ECO:0007669"/>
    <property type="project" value="UniProtKB-UniRule"/>
</dbReference>
<dbReference type="GO" id="GO:0046872">
    <property type="term" value="F:metal ion binding"/>
    <property type="evidence" value="ECO:0007669"/>
    <property type="project" value="UniProtKB-KW"/>
</dbReference>
<dbReference type="GO" id="GO:0030488">
    <property type="term" value="P:tRNA methylation"/>
    <property type="evidence" value="ECO:0007669"/>
    <property type="project" value="TreeGrafter"/>
</dbReference>
<dbReference type="GO" id="GO:0002098">
    <property type="term" value="P:tRNA wobble uridine modification"/>
    <property type="evidence" value="ECO:0007669"/>
    <property type="project" value="TreeGrafter"/>
</dbReference>
<dbReference type="CDD" id="cd04164">
    <property type="entry name" value="trmE"/>
    <property type="match status" value="1"/>
</dbReference>
<dbReference type="CDD" id="cd14858">
    <property type="entry name" value="TrmE_N"/>
    <property type="match status" value="1"/>
</dbReference>
<dbReference type="FunFam" id="3.30.1360.120:FF:000001">
    <property type="entry name" value="tRNA modification GTPase MnmE"/>
    <property type="match status" value="1"/>
</dbReference>
<dbReference type="FunFam" id="3.40.50.300:FF:000249">
    <property type="entry name" value="tRNA modification GTPase MnmE"/>
    <property type="match status" value="1"/>
</dbReference>
<dbReference type="Gene3D" id="3.40.50.300">
    <property type="entry name" value="P-loop containing nucleotide triphosphate hydrolases"/>
    <property type="match status" value="1"/>
</dbReference>
<dbReference type="Gene3D" id="3.30.1360.120">
    <property type="entry name" value="Probable tRNA modification gtpase trme, domain 1"/>
    <property type="match status" value="1"/>
</dbReference>
<dbReference type="Gene3D" id="1.20.120.430">
    <property type="entry name" value="tRNA modification GTPase MnmE domain 2"/>
    <property type="match status" value="1"/>
</dbReference>
<dbReference type="HAMAP" id="MF_00379">
    <property type="entry name" value="GTPase_MnmE"/>
    <property type="match status" value="1"/>
</dbReference>
<dbReference type="InterPro" id="IPR031168">
    <property type="entry name" value="G_TrmE"/>
</dbReference>
<dbReference type="InterPro" id="IPR006073">
    <property type="entry name" value="GTP-bd"/>
</dbReference>
<dbReference type="InterPro" id="IPR018948">
    <property type="entry name" value="GTP-bd_TrmE_N"/>
</dbReference>
<dbReference type="InterPro" id="IPR004520">
    <property type="entry name" value="GTPase_MnmE"/>
</dbReference>
<dbReference type="InterPro" id="IPR027368">
    <property type="entry name" value="MnmE_dom2"/>
</dbReference>
<dbReference type="InterPro" id="IPR025867">
    <property type="entry name" value="MnmE_helical"/>
</dbReference>
<dbReference type="InterPro" id="IPR027417">
    <property type="entry name" value="P-loop_NTPase"/>
</dbReference>
<dbReference type="InterPro" id="IPR005225">
    <property type="entry name" value="Small_GTP-bd"/>
</dbReference>
<dbReference type="InterPro" id="IPR027266">
    <property type="entry name" value="TrmE/GcvT_dom1"/>
</dbReference>
<dbReference type="NCBIfam" id="TIGR00450">
    <property type="entry name" value="mnmE_trmE_thdF"/>
    <property type="match status" value="1"/>
</dbReference>
<dbReference type="NCBIfam" id="NF003661">
    <property type="entry name" value="PRK05291.1-3"/>
    <property type="match status" value="1"/>
</dbReference>
<dbReference type="NCBIfam" id="TIGR00231">
    <property type="entry name" value="small_GTP"/>
    <property type="match status" value="1"/>
</dbReference>
<dbReference type="PANTHER" id="PTHR42714">
    <property type="entry name" value="TRNA MODIFICATION GTPASE GTPBP3"/>
    <property type="match status" value="1"/>
</dbReference>
<dbReference type="PANTHER" id="PTHR42714:SF2">
    <property type="entry name" value="TRNA MODIFICATION GTPASE GTPBP3, MITOCHONDRIAL"/>
    <property type="match status" value="1"/>
</dbReference>
<dbReference type="Pfam" id="PF01926">
    <property type="entry name" value="MMR_HSR1"/>
    <property type="match status" value="1"/>
</dbReference>
<dbReference type="Pfam" id="PF12631">
    <property type="entry name" value="MnmE_helical"/>
    <property type="match status" value="1"/>
</dbReference>
<dbReference type="Pfam" id="PF10396">
    <property type="entry name" value="TrmE_N"/>
    <property type="match status" value="1"/>
</dbReference>
<dbReference type="SUPFAM" id="SSF52540">
    <property type="entry name" value="P-loop containing nucleoside triphosphate hydrolases"/>
    <property type="match status" value="1"/>
</dbReference>
<dbReference type="SUPFAM" id="SSF116878">
    <property type="entry name" value="TrmE connector domain"/>
    <property type="match status" value="1"/>
</dbReference>
<dbReference type="PROSITE" id="PS51709">
    <property type="entry name" value="G_TRME"/>
    <property type="match status" value="1"/>
</dbReference>
<organism>
    <name type="scientific">Marinomonas sp. (strain MWYL1)</name>
    <dbReference type="NCBI Taxonomy" id="400668"/>
    <lineage>
        <taxon>Bacteria</taxon>
        <taxon>Pseudomonadati</taxon>
        <taxon>Pseudomonadota</taxon>
        <taxon>Gammaproteobacteria</taxon>
        <taxon>Oceanospirillales</taxon>
        <taxon>Oceanospirillaceae</taxon>
        <taxon>Marinomonas</taxon>
    </lineage>
</organism>
<accession>A6W3V0</accession>
<evidence type="ECO:0000255" key="1">
    <source>
        <dbReference type="HAMAP-Rule" id="MF_00379"/>
    </source>
</evidence>
<protein>
    <recommendedName>
        <fullName evidence="1">tRNA modification GTPase MnmE</fullName>
        <ecNumber evidence="1">3.6.-.-</ecNumber>
    </recommendedName>
</protein>